<organism>
    <name type="scientific">Mus musculus</name>
    <name type="common">Mouse</name>
    <dbReference type="NCBI Taxonomy" id="10090"/>
    <lineage>
        <taxon>Eukaryota</taxon>
        <taxon>Metazoa</taxon>
        <taxon>Chordata</taxon>
        <taxon>Craniata</taxon>
        <taxon>Vertebrata</taxon>
        <taxon>Euteleostomi</taxon>
        <taxon>Mammalia</taxon>
        <taxon>Eutheria</taxon>
        <taxon>Euarchontoglires</taxon>
        <taxon>Glires</taxon>
        <taxon>Rodentia</taxon>
        <taxon>Myomorpha</taxon>
        <taxon>Muroidea</taxon>
        <taxon>Muridae</taxon>
        <taxon>Murinae</taxon>
        <taxon>Mus</taxon>
        <taxon>Mus</taxon>
    </lineage>
</organism>
<proteinExistence type="evidence at protein level"/>
<accession>O54957</accession>
<evidence type="ECO:0000250" key="1"/>
<evidence type="ECO:0000250" key="2">
    <source>
        <dbReference type="UniProtKB" id="O43561"/>
    </source>
</evidence>
<evidence type="ECO:0000255" key="3"/>
<evidence type="ECO:0000256" key="4">
    <source>
        <dbReference type="SAM" id="MobiDB-lite"/>
    </source>
</evidence>
<evidence type="ECO:0000269" key="5">
    <source>
    </source>
</evidence>
<evidence type="ECO:0000269" key="6">
    <source>
    </source>
</evidence>
<evidence type="ECO:0000269" key="7">
    <source>
    </source>
</evidence>
<evidence type="ECO:0000269" key="8">
    <source>
    </source>
</evidence>
<evidence type="ECO:0000269" key="9">
    <source>
    </source>
</evidence>
<evidence type="ECO:0007744" key="10">
    <source>
    </source>
</evidence>
<gene>
    <name type="primary">Lat</name>
</gene>
<protein>
    <recommendedName>
        <fullName>Linker for activation of T-cells family member 1</fullName>
    </recommendedName>
    <alternativeName>
        <fullName>36 kDa phosphotyrosine adapter protein</fullName>
        <shortName>pp36</shortName>
    </alternativeName>
    <alternativeName>
        <fullName>p36-38</fullName>
    </alternativeName>
</protein>
<reference key="1">
    <citation type="journal article" date="1998" name="Cell">
        <title>LAT: the ZAP-70 tyrosine kinase substrate that links T cell receptor to cellular activation.</title>
        <authorList>
            <person name="Zhang W."/>
            <person name="Sloan-Lancaster J."/>
            <person name="Kitchen J."/>
            <person name="Trible R.P."/>
            <person name="Samelson L.E."/>
        </authorList>
    </citation>
    <scope>NUCLEOTIDE SEQUENCE [MRNA]</scope>
    <source>
        <tissue>Thymus</tissue>
    </source>
</reference>
<reference key="2">
    <citation type="journal article" date="2004" name="Genome Res.">
        <title>The status, quality, and expansion of the NIH full-length cDNA project: the Mammalian Gene Collection (MGC).</title>
        <authorList>
            <consortium name="The MGC Project Team"/>
        </authorList>
    </citation>
    <scope>NUCLEOTIDE SEQUENCE [LARGE SCALE MRNA]</scope>
    <source>
        <strain>FVB/N</strain>
        <tissue>Salivary gland</tissue>
    </source>
</reference>
<reference key="3">
    <citation type="journal article" date="2000" name="Immunity">
        <title>LAT is essential for Fc(epsilon)RI-mediated mast cell activation.</title>
        <authorList>
            <person name="Saitoh S."/>
            <person name="Arudchandran R."/>
            <person name="Manetz T.S."/>
            <person name="Zhang W."/>
            <person name="Sommers C.L."/>
            <person name="Love P.E."/>
            <person name="Rivera J."/>
            <person name="Samelson L.E."/>
        </authorList>
    </citation>
    <scope>FUNCTION IN MAST CELLS</scope>
    <scope>TISSUE SPECIFICITY</scope>
</reference>
<reference key="4">
    <citation type="journal article" date="2001" name="J. Biol. Chem.">
        <title>MIST functions through distinct domains in immunoreceptor signaling in the presence and absence of LAT.</title>
        <authorList>
            <person name="Goitsuka R."/>
            <person name="Tatsuno A."/>
            <person name="Ishiai M."/>
            <person name="Kurosaki T."/>
            <person name="Kitamura D."/>
        </authorList>
    </citation>
    <scope>INTERACTION WITH CLNK</scope>
</reference>
<reference key="5">
    <citation type="journal article" date="2003" name="J. Immunol.">
        <title>Glucocorticoids alter the lipid and protein composition of membrane rafts of a murine T cell hybridoma.</title>
        <authorList>
            <person name="Van Laethem F."/>
            <person name="Liang X."/>
            <person name="Andris F."/>
            <person name="Urbain J."/>
            <person name="Vandenbranden M."/>
            <person name="Ruysschaert J.-M."/>
            <person name="Resh M.D."/>
            <person name="Stulnig T.M."/>
            <person name="Leo O."/>
        </authorList>
    </citation>
    <scope>PALMITOYLATION</scope>
</reference>
<reference key="6">
    <citation type="journal article" date="2004" name="Bioessays">
        <title>LAT: a T lymphocyte adapter protein that couples the antigen receptor to downstream signaling pathways.</title>
        <authorList>
            <person name="Sommers C.L."/>
            <person name="Samelson L.E."/>
            <person name="Love P.E."/>
        </authorList>
    </citation>
    <scope>REVIEW ON FUNCTION IN T-CELLS</scope>
</reference>
<reference key="7">
    <citation type="journal article" date="2009" name="J. Immunol.">
        <title>Palmitoylation-dependent plasma membrane transport but lipid raft-independent signaling by linker for activation of T cells.</title>
        <authorList>
            <person name="Hundt M."/>
            <person name="Harada Y."/>
            <person name="De Giorgio L."/>
            <person name="Tanimura N."/>
            <person name="Zhang W."/>
            <person name="Altman A."/>
        </authorList>
    </citation>
    <scope>PALMITOYLATION AT CYS-27 AND CYS-30</scope>
</reference>
<reference key="8">
    <citation type="journal article" date="2010" name="Cell">
        <title>A tissue-specific atlas of mouse protein phosphorylation and expression.</title>
        <authorList>
            <person name="Huttlin E.L."/>
            <person name="Jedrychowski M.P."/>
            <person name="Elias J.E."/>
            <person name="Goswami T."/>
            <person name="Rad R."/>
            <person name="Beausoleil S.A."/>
            <person name="Villen J."/>
            <person name="Haas W."/>
            <person name="Sowa M.E."/>
            <person name="Gygi S.P."/>
        </authorList>
    </citation>
    <scope>PHOSPHORYLATION [LARGE SCALE ANALYSIS] AT SER-41; SER-44; SER-109; SER-112; SER-199; SER-212 AND SER-215</scope>
    <scope>IDENTIFICATION BY MASS SPECTROMETRY [LARGE SCALE ANALYSIS]</scope>
    <source>
        <tissue>Lung</tissue>
        <tissue>Spleen</tissue>
    </source>
</reference>
<reference key="9">
    <citation type="journal article" date="2012" name="J. Immunol.">
        <title>Interchangeability of Themis1 and Themis2 in thymocyte development reveals two related proteins with conserved molecular function.</title>
        <authorList>
            <person name="Lesourne R."/>
            <person name="Zvezdova E."/>
            <person name="Song K.D."/>
            <person name="El-Khoury D."/>
            <person name="Uehara S."/>
            <person name="Barr V.A."/>
            <person name="Samelson L.E."/>
            <person name="Love P.E."/>
        </authorList>
    </citation>
    <scope>INTERACTION WITH THEMIS2</scope>
</reference>
<reference key="10">
    <citation type="journal article" date="2012" name="Nat. Immunol.">
        <title>Tespa1 is involved in late thymocyte development through the regulation of TCR-mediated signaling.</title>
        <authorList>
            <person name="Wang D."/>
            <person name="Zheng M."/>
            <person name="Lei L."/>
            <person name="Ji J."/>
            <person name="Yao Y."/>
            <person name="Qiu Y."/>
            <person name="Ma L."/>
            <person name="Lou J."/>
            <person name="Ouyang C."/>
            <person name="Zhang X."/>
            <person name="He Y."/>
            <person name="Chi J."/>
            <person name="Wang L."/>
            <person name="Kuang Y."/>
            <person name="Wang J."/>
            <person name="Cao X."/>
            <person name="Lu L."/>
        </authorList>
    </citation>
    <scope>INTERACTION WITH GRB2; PLCG1 AND THEMIS</scope>
    <source>
        <tissue>Thymocyte</tissue>
    </source>
</reference>
<keyword id="KW-1064">Adaptive immunity</keyword>
<keyword id="KW-1003">Cell membrane</keyword>
<keyword id="KW-0391">Immunity</keyword>
<keyword id="KW-0449">Lipoprotein</keyword>
<keyword id="KW-0467">Mast cell degranulation</keyword>
<keyword id="KW-0472">Membrane</keyword>
<keyword id="KW-0564">Palmitate</keyword>
<keyword id="KW-0597">Phosphoprotein</keyword>
<keyword id="KW-1185">Reference proteome</keyword>
<keyword id="KW-0735">Signal-anchor</keyword>
<keyword id="KW-0812">Transmembrane</keyword>
<keyword id="KW-1133">Transmembrane helix</keyword>
<keyword id="KW-0832">Ubl conjugation</keyword>
<sequence>MEADALSPVGLGLLLLPFLVTLLAALCVRCRELPVSYDSTSTESLYPRSILIKPPQITVPRTPAVSYPLVTSFPPLRQPDLLPIPRSPQPLGGSHRMPSSQQNSDDANSVASYENQEPACKNVDADEDEDDYPNGYLVVLPDSSPAAVPVVSSAPVPSNPDLGDSAFSVESCEDYVNVPESEESAEASLDGSREYVNVSPEQQPVTRAELASVNSQEVEDEGEEEGVDGEEAPDYENLQELN</sequence>
<feature type="chain" id="PRO_0000083326" description="Linker for activation of T-cells family member 1">
    <location>
        <begin position="1"/>
        <end position="242"/>
    </location>
</feature>
<feature type="topological domain" description="Extracellular" evidence="3">
    <location>
        <begin position="1"/>
        <end position="4"/>
    </location>
</feature>
<feature type="transmembrane region" description="Helical; Signal-anchor for type III membrane protein" evidence="3">
    <location>
        <begin position="5"/>
        <end position="28"/>
    </location>
</feature>
<feature type="topological domain" description="Cytoplasmic" evidence="3">
    <location>
        <begin position="29"/>
        <end position="242"/>
    </location>
</feature>
<feature type="region of interest" description="Disordered" evidence="4">
    <location>
        <begin position="78"/>
        <end position="118"/>
    </location>
</feature>
<feature type="region of interest" description="Interaction with PLCG1" evidence="1">
    <location>
        <begin position="136"/>
        <end position="139"/>
    </location>
</feature>
<feature type="region of interest" description="Interaction with GRB2, GRAP2 and PIK3R1" evidence="1">
    <location>
        <begin position="175"/>
        <end position="178"/>
    </location>
</feature>
<feature type="region of interest" description="Disordered" evidence="4">
    <location>
        <begin position="176"/>
        <end position="242"/>
    </location>
</feature>
<feature type="region of interest" description="Interaction with GRB2, GRAP2 and PIK3R1" evidence="1">
    <location>
        <begin position="195"/>
        <end position="198"/>
    </location>
</feature>
<feature type="compositionally biased region" description="Polar residues" evidence="4">
    <location>
        <begin position="97"/>
        <end position="115"/>
    </location>
</feature>
<feature type="compositionally biased region" description="Acidic residues" evidence="4">
    <location>
        <begin position="217"/>
        <end position="234"/>
    </location>
</feature>
<feature type="modified residue" description="Phosphothreonine" evidence="2">
    <location>
        <position position="40"/>
    </location>
</feature>
<feature type="modified residue" description="Phosphoserine" evidence="10">
    <location>
        <position position="41"/>
    </location>
</feature>
<feature type="modified residue" description="Phosphoserine" evidence="10">
    <location>
        <position position="44"/>
    </location>
</feature>
<feature type="modified residue" description="Phosphoserine" evidence="2">
    <location>
        <position position="87"/>
    </location>
</feature>
<feature type="modified residue" description="Phosphoserine" evidence="2">
    <location>
        <position position="104"/>
    </location>
</feature>
<feature type="modified residue" description="Phosphoserine" evidence="10">
    <location>
        <position position="109"/>
    </location>
</feature>
<feature type="modified residue" description="Phosphoserine" evidence="10">
    <location>
        <position position="112"/>
    </location>
</feature>
<feature type="modified residue" description="Phosphotyrosine" evidence="2">
    <location>
        <position position="175"/>
    </location>
</feature>
<feature type="modified residue" description="Phosphoserine" evidence="10">
    <location>
        <position position="199"/>
    </location>
</feature>
<feature type="modified residue" description="Phosphoserine" evidence="10">
    <location>
        <position position="212"/>
    </location>
</feature>
<feature type="modified residue" description="Phosphoserine" evidence="10">
    <location>
        <position position="215"/>
    </location>
</feature>
<feature type="modified residue" description="Phosphotyrosine" evidence="2">
    <location>
        <position position="235"/>
    </location>
</feature>
<feature type="lipid moiety-binding region" description="S-palmitoyl cysteine" evidence="7">
    <location>
        <position position="27"/>
    </location>
</feature>
<feature type="lipid moiety-binding region" description="S-palmitoyl cysteine" evidence="7">
    <location>
        <position position="30"/>
    </location>
</feature>
<comment type="function">
    <text evidence="5">Required for TCR (T-cell antigen receptor)- and pre-TCR-mediated signaling, both in mature T-cells and during their development. Involved in FCGR3 (low affinity immunoglobulin gamma Fc region receptor III)-mediated signaling in natural killer cells and FCER1 (high affinity immunoglobulin epsilon receptor)-mediated signaling in mast cells. Couples activation of these receptors and their associated kinases with distal intracellular events such as mobilization of intracellular calcium stores, PKC activation, MAPK activation or cytoskeletal reorganization through the recruitment of PLCG1, GRB2, GRAP2, and other signaling molecules.</text>
</comment>
<comment type="subunit">
    <text evidence="1 6 8 9">When phosphorylated, interacts directly with the PIK3R1 subunit of phosphoinositide 3-kinase and the SH2 domains of GRB2, GRAP, GRAP2, PLCG1 and PLCG2. Interacts indirectly with CBL, SOS, VAV, and LCP2. Interacts with SHB and SKAP2. Interacts with FCGR1A (By similarity). Interacts with CLNK. Interacts with GRB2, PLCG1 and THEMIS upon TCR activation in thymocytes. Interacts with THEMIS2 (PubMed:22732588).</text>
</comment>
<comment type="interaction">
    <interactant intactId="EBI-6390034">
        <id>O54957</id>
    </interactant>
    <interactant intactId="EBI-1688">
        <id>Q60631</id>
        <label>Grb2</label>
    </interactant>
    <organismsDiffer>false</organismsDiffer>
    <experiments>5</experiments>
</comment>
<comment type="interaction">
    <interactant intactId="EBI-6390034">
        <id>O54957</id>
    </interactant>
    <interactant intactId="EBI-5324248">
        <id>Q60787</id>
        <label>Lcp2</label>
    </interactant>
    <organismsDiffer>false</organismsDiffer>
    <experiments>8</experiments>
</comment>
<comment type="interaction">
    <interactant intactId="EBI-6390034">
        <id>O54957</id>
    </interactant>
    <interactant intactId="EBI-300133">
        <id>Q62077</id>
        <label>Plcg1</label>
    </interactant>
    <organismsDiffer>false</organismsDiffer>
    <experiments>5</experiments>
</comment>
<comment type="subcellular location">
    <subcellularLocation>
        <location>Cell membrane</location>
        <topology>Single-pass type III membrane protein</topology>
    </subcellularLocation>
    <text>Present in lipid rafts.</text>
</comment>
<comment type="tissue specificity">
    <text evidence="5">Expressed in T-cells and mast cells.</text>
</comment>
<comment type="PTM">
    <text evidence="1">Phosphorylated on tyrosines by ZAP70 upon TCR activation, or by SYK upon other immunoreceptor activation; which leads to the recruitment of multiple signaling molecules. Is one of the most prominently tyrosine-phosphorylated proteins detected following TCR engagement. May be dephosphorylated by PTPRJ. Phosphorylated by ITK leading to the recruitment of VAV1 to LAT-containing complexes (By similarity).</text>
</comment>
<comment type="PTM">
    <text evidence="1">Palmitoylation of Cys-27 and Cys-30 is required for raft targeting and efficient phosphorylation.</text>
</comment>
<comment type="PTM">
    <text evidence="2">Phosphorylated on tyrosines by ZAP70 upon TCR activation, or by SYK upon other immunoreceptor activation; which leads to the recruitment of multiple signaling molecules. Is one of the most prominently tyrosine-phosphorylated proteins detected following TCR engagement. May be dephosphorylated by PTPRJ. Phosphorylated by ITK leading to the recruitment of VAV1 to LAT-containing complexes.</text>
</comment>
<comment type="PTM">
    <text evidence="2">'Lys-63'-linked ubiquitinated by TRAF6.</text>
</comment>
<comment type="miscellaneous">
    <text evidence="1">Engagement of killer inhibitory receptors (KIR) disrupts the interaction of PLCG1 with LAT and blocks target cell-induced activation of PLC, maybe by inducing the dephosphorylation of LAT.</text>
</comment>
<name>LAT_MOUSE</name>
<dbReference type="EMBL" id="AF036907">
    <property type="protein sequence ID" value="AAC40054.1"/>
    <property type="molecule type" value="mRNA"/>
</dbReference>
<dbReference type="EMBL" id="BC013337">
    <property type="protein sequence ID" value="AAH13337.1"/>
    <property type="molecule type" value="mRNA"/>
</dbReference>
<dbReference type="CCDS" id="CCDS21825.1"/>
<dbReference type="RefSeq" id="NP_034819.1">
    <property type="nucleotide sequence ID" value="NM_010689.3"/>
</dbReference>
<dbReference type="BioGRID" id="201112">
    <property type="interactions" value="2"/>
</dbReference>
<dbReference type="ELM" id="O54957"/>
<dbReference type="FunCoup" id="O54957">
    <property type="interactions" value="694"/>
</dbReference>
<dbReference type="IntAct" id="O54957">
    <property type="interactions" value="58"/>
</dbReference>
<dbReference type="MINT" id="O54957"/>
<dbReference type="STRING" id="10090.ENSMUSP00000032997"/>
<dbReference type="iPTMnet" id="O54957"/>
<dbReference type="PhosphoSitePlus" id="O54957"/>
<dbReference type="SwissPalm" id="O54957"/>
<dbReference type="jPOST" id="O54957"/>
<dbReference type="PaxDb" id="10090-ENSMUSP00000032997"/>
<dbReference type="ProteomicsDB" id="264977"/>
<dbReference type="Antibodypedia" id="2621">
    <property type="antibodies" value="1015 antibodies from 47 providers"/>
</dbReference>
<dbReference type="DNASU" id="16797"/>
<dbReference type="Ensembl" id="ENSMUST00000032997.8">
    <property type="protein sequence ID" value="ENSMUSP00000032997.7"/>
    <property type="gene ID" value="ENSMUSG00000030742.8"/>
</dbReference>
<dbReference type="GeneID" id="16797"/>
<dbReference type="KEGG" id="mmu:16797"/>
<dbReference type="UCSC" id="uc009jqx.1">
    <property type="organism name" value="mouse"/>
</dbReference>
<dbReference type="AGR" id="MGI:1342293"/>
<dbReference type="CTD" id="27040"/>
<dbReference type="MGI" id="MGI:1342293">
    <property type="gene designation" value="Lat"/>
</dbReference>
<dbReference type="VEuPathDB" id="HostDB:ENSMUSG00000030742"/>
<dbReference type="eggNOG" id="ENOG502SXAZ">
    <property type="taxonomic scope" value="Eukaryota"/>
</dbReference>
<dbReference type="GeneTree" id="ENSGT00390000014223"/>
<dbReference type="HOGENOM" id="CLU_093883_0_0_1"/>
<dbReference type="InParanoid" id="O54957"/>
<dbReference type="OMA" id="QEPACEN"/>
<dbReference type="OrthoDB" id="9451490at2759"/>
<dbReference type="PhylomeDB" id="O54957"/>
<dbReference type="TreeFam" id="TF337741"/>
<dbReference type="Reactome" id="R-MMU-114604">
    <property type="pathway name" value="GPVI-mediated activation cascade"/>
</dbReference>
<dbReference type="Reactome" id="R-MMU-202433">
    <property type="pathway name" value="Generation of second messenger molecules"/>
</dbReference>
<dbReference type="Reactome" id="R-MMU-2424491">
    <property type="pathway name" value="DAP12 signaling"/>
</dbReference>
<dbReference type="Reactome" id="R-MMU-2454202">
    <property type="pathway name" value="Fc epsilon receptor (FCERI) signaling"/>
</dbReference>
<dbReference type="Reactome" id="R-MMU-2871796">
    <property type="pathway name" value="FCERI mediated MAPK activation"/>
</dbReference>
<dbReference type="Reactome" id="R-MMU-2871809">
    <property type="pathway name" value="FCERI mediated Ca+2 mobilization"/>
</dbReference>
<dbReference type="Reactome" id="R-MMU-5673001">
    <property type="pathway name" value="RAF/MAP kinase cascade"/>
</dbReference>
<dbReference type="BioGRID-ORCS" id="16797">
    <property type="hits" value="0 hits in 61 CRISPR screens"/>
</dbReference>
<dbReference type="ChiTaRS" id="Lat">
    <property type="organism name" value="mouse"/>
</dbReference>
<dbReference type="PRO" id="PR:O54957"/>
<dbReference type="Proteomes" id="UP000000589">
    <property type="component" value="Chromosome 7"/>
</dbReference>
<dbReference type="RNAct" id="O54957">
    <property type="molecule type" value="protein"/>
</dbReference>
<dbReference type="Bgee" id="ENSMUSG00000030742">
    <property type="expression patterns" value="Expressed in peripheral lymph node and 130 other cell types or tissues"/>
</dbReference>
<dbReference type="ExpressionAtlas" id="O54957">
    <property type="expression patterns" value="baseline and differential"/>
</dbReference>
<dbReference type="GO" id="GO:0005911">
    <property type="term" value="C:cell-cell junction"/>
    <property type="evidence" value="ECO:0000314"/>
    <property type="project" value="MGI"/>
</dbReference>
<dbReference type="GO" id="GO:0008180">
    <property type="term" value="C:COP9 signalosome"/>
    <property type="evidence" value="ECO:0000314"/>
    <property type="project" value="UniProtKB"/>
</dbReference>
<dbReference type="GO" id="GO:0005794">
    <property type="term" value="C:Golgi apparatus"/>
    <property type="evidence" value="ECO:0007669"/>
    <property type="project" value="Ensembl"/>
</dbReference>
<dbReference type="GO" id="GO:0001772">
    <property type="term" value="C:immunological synapse"/>
    <property type="evidence" value="ECO:0000314"/>
    <property type="project" value="MGI"/>
</dbReference>
<dbReference type="GO" id="GO:0005886">
    <property type="term" value="C:plasma membrane"/>
    <property type="evidence" value="ECO:0000304"/>
    <property type="project" value="MGI"/>
</dbReference>
<dbReference type="GO" id="GO:0019901">
    <property type="term" value="F:protein kinase binding"/>
    <property type="evidence" value="ECO:0007669"/>
    <property type="project" value="Ensembl"/>
</dbReference>
<dbReference type="GO" id="GO:0030159">
    <property type="term" value="F:signaling receptor complex adaptor activity"/>
    <property type="evidence" value="ECO:0000250"/>
    <property type="project" value="HGNC-UCL"/>
</dbReference>
<dbReference type="GO" id="GO:0002250">
    <property type="term" value="P:adaptive immune response"/>
    <property type="evidence" value="ECO:0007669"/>
    <property type="project" value="UniProtKB-KW"/>
</dbReference>
<dbReference type="GO" id="GO:0019722">
    <property type="term" value="P:calcium-mediated signaling"/>
    <property type="evidence" value="ECO:0000250"/>
    <property type="project" value="HGNC-UCL"/>
</dbReference>
<dbReference type="GO" id="GO:0007169">
    <property type="term" value="P:cell surface receptor protein tyrosine kinase signaling pathway"/>
    <property type="evidence" value="ECO:0000304"/>
    <property type="project" value="MGI"/>
</dbReference>
<dbReference type="GO" id="GO:0006968">
    <property type="term" value="P:cellular defense response"/>
    <property type="evidence" value="ECO:0000304"/>
    <property type="project" value="MGI"/>
</dbReference>
<dbReference type="GO" id="GO:0010467">
    <property type="term" value="P:gene expression"/>
    <property type="evidence" value="ECO:0000315"/>
    <property type="project" value="MGI"/>
</dbReference>
<dbReference type="GO" id="GO:0048872">
    <property type="term" value="P:homeostasis of number of cells"/>
    <property type="evidence" value="ECO:0000315"/>
    <property type="project" value="MGI"/>
</dbReference>
<dbReference type="GO" id="GO:0006955">
    <property type="term" value="P:immune response"/>
    <property type="evidence" value="ECO:0000250"/>
    <property type="project" value="HGNC-UCL"/>
</dbReference>
<dbReference type="GO" id="GO:0006954">
    <property type="term" value="P:inflammatory response"/>
    <property type="evidence" value="ECO:0000315"/>
    <property type="project" value="MGI"/>
</dbReference>
<dbReference type="GO" id="GO:0007229">
    <property type="term" value="P:integrin-mediated signaling pathway"/>
    <property type="evidence" value="ECO:0000250"/>
    <property type="project" value="HGNC-UCL"/>
</dbReference>
<dbReference type="GO" id="GO:0035556">
    <property type="term" value="P:intracellular signal transduction"/>
    <property type="evidence" value="ECO:0000250"/>
    <property type="project" value="HGNC-UCL"/>
</dbReference>
<dbReference type="GO" id="GO:0002260">
    <property type="term" value="P:lymphocyte homeostasis"/>
    <property type="evidence" value="ECO:0000315"/>
    <property type="project" value="MGI"/>
</dbReference>
<dbReference type="GO" id="GO:0043303">
    <property type="term" value="P:mast cell degranulation"/>
    <property type="evidence" value="ECO:0007669"/>
    <property type="project" value="UniProtKB-KW"/>
</dbReference>
<dbReference type="GO" id="GO:0043410">
    <property type="term" value="P:positive regulation of MAPK cascade"/>
    <property type="evidence" value="ECO:0007669"/>
    <property type="project" value="Ensembl"/>
</dbReference>
<dbReference type="GO" id="GO:0007265">
    <property type="term" value="P:Ras protein signal transduction"/>
    <property type="evidence" value="ECO:0000250"/>
    <property type="project" value="HGNC-UCL"/>
</dbReference>
<dbReference type="GO" id="GO:0050863">
    <property type="term" value="P:regulation of T cell activation"/>
    <property type="evidence" value="ECO:0000250"/>
    <property type="project" value="HGNC-UCL"/>
</dbReference>
<dbReference type="GO" id="GO:0050852">
    <property type="term" value="P:T cell receptor signaling pathway"/>
    <property type="evidence" value="ECO:0007669"/>
    <property type="project" value="Ensembl"/>
</dbReference>
<dbReference type="InterPro" id="IPR008359">
    <property type="entry name" value="Linker_for_activat_Tcells_prot"/>
</dbReference>
<dbReference type="PANTHER" id="PTHR15586">
    <property type="entry name" value="LINKER FOR ACTIVATION OF T-CELLS FAMILY MEMBER 1"/>
    <property type="match status" value="1"/>
</dbReference>
<dbReference type="PANTHER" id="PTHR15586:SF0">
    <property type="entry name" value="LINKER FOR ACTIVATION OF T-CELLS FAMILY MEMBER 1"/>
    <property type="match status" value="1"/>
</dbReference>
<dbReference type="Pfam" id="PF15234">
    <property type="entry name" value="LAT"/>
    <property type="match status" value="1"/>
</dbReference>
<dbReference type="PRINTS" id="PR01781">
    <property type="entry name" value="LATPROTEIN"/>
</dbReference>